<dbReference type="EC" id="2.8.1.4" evidence="1"/>
<dbReference type="EMBL" id="AE017194">
    <property type="protein sequence ID" value="AAS43685.1"/>
    <property type="molecule type" value="Genomic_DNA"/>
</dbReference>
<dbReference type="SMR" id="Q72Z85"/>
<dbReference type="KEGG" id="bca:BCE_4784"/>
<dbReference type="HOGENOM" id="CLU_037952_4_0_9"/>
<dbReference type="UniPathway" id="UPA00060"/>
<dbReference type="Proteomes" id="UP000002527">
    <property type="component" value="Chromosome"/>
</dbReference>
<dbReference type="GO" id="GO:0005829">
    <property type="term" value="C:cytosol"/>
    <property type="evidence" value="ECO:0007669"/>
    <property type="project" value="TreeGrafter"/>
</dbReference>
<dbReference type="GO" id="GO:0005524">
    <property type="term" value="F:ATP binding"/>
    <property type="evidence" value="ECO:0007669"/>
    <property type="project" value="UniProtKB-UniRule"/>
</dbReference>
<dbReference type="GO" id="GO:0004810">
    <property type="term" value="F:CCA tRNA nucleotidyltransferase activity"/>
    <property type="evidence" value="ECO:0007669"/>
    <property type="project" value="InterPro"/>
</dbReference>
<dbReference type="GO" id="GO:0000049">
    <property type="term" value="F:tRNA binding"/>
    <property type="evidence" value="ECO:0007669"/>
    <property type="project" value="UniProtKB-UniRule"/>
</dbReference>
<dbReference type="GO" id="GO:0140741">
    <property type="term" value="F:tRNA-uracil-4 sulfurtransferase activity"/>
    <property type="evidence" value="ECO:0007669"/>
    <property type="project" value="UniProtKB-EC"/>
</dbReference>
<dbReference type="GO" id="GO:0009228">
    <property type="term" value="P:thiamine biosynthetic process"/>
    <property type="evidence" value="ECO:0007669"/>
    <property type="project" value="UniProtKB-KW"/>
</dbReference>
<dbReference type="GO" id="GO:0009229">
    <property type="term" value="P:thiamine diphosphate biosynthetic process"/>
    <property type="evidence" value="ECO:0007669"/>
    <property type="project" value="UniProtKB-UniRule"/>
</dbReference>
<dbReference type="GO" id="GO:0052837">
    <property type="term" value="P:thiazole biosynthetic process"/>
    <property type="evidence" value="ECO:0007669"/>
    <property type="project" value="TreeGrafter"/>
</dbReference>
<dbReference type="GO" id="GO:0002937">
    <property type="term" value="P:tRNA 4-thiouridine biosynthesis"/>
    <property type="evidence" value="ECO:0007669"/>
    <property type="project" value="TreeGrafter"/>
</dbReference>
<dbReference type="CDD" id="cd01712">
    <property type="entry name" value="PPase_ThiI"/>
    <property type="match status" value="1"/>
</dbReference>
<dbReference type="CDD" id="cd11716">
    <property type="entry name" value="THUMP_ThiI"/>
    <property type="match status" value="1"/>
</dbReference>
<dbReference type="FunFam" id="3.30.2130.30:FF:000003">
    <property type="entry name" value="Probable tRNA sulfurtransferase"/>
    <property type="match status" value="1"/>
</dbReference>
<dbReference type="FunFam" id="3.40.50.620:FF:000053">
    <property type="entry name" value="Probable tRNA sulfurtransferase"/>
    <property type="match status" value="1"/>
</dbReference>
<dbReference type="Gene3D" id="3.30.2130.30">
    <property type="match status" value="1"/>
</dbReference>
<dbReference type="Gene3D" id="3.40.50.620">
    <property type="entry name" value="HUPs"/>
    <property type="match status" value="1"/>
</dbReference>
<dbReference type="HAMAP" id="MF_00021">
    <property type="entry name" value="ThiI"/>
    <property type="match status" value="1"/>
</dbReference>
<dbReference type="InterPro" id="IPR014729">
    <property type="entry name" value="Rossmann-like_a/b/a_fold"/>
</dbReference>
<dbReference type="InterPro" id="IPR020536">
    <property type="entry name" value="ThiI_AANH"/>
</dbReference>
<dbReference type="InterPro" id="IPR054173">
    <property type="entry name" value="ThiI_fer"/>
</dbReference>
<dbReference type="InterPro" id="IPR049961">
    <property type="entry name" value="ThiI_N"/>
</dbReference>
<dbReference type="InterPro" id="IPR004114">
    <property type="entry name" value="THUMP_dom"/>
</dbReference>
<dbReference type="InterPro" id="IPR049962">
    <property type="entry name" value="THUMP_ThiI"/>
</dbReference>
<dbReference type="InterPro" id="IPR003720">
    <property type="entry name" value="tRNA_STrfase"/>
</dbReference>
<dbReference type="InterPro" id="IPR050102">
    <property type="entry name" value="tRNA_sulfurtransferase_ThiI"/>
</dbReference>
<dbReference type="NCBIfam" id="TIGR00342">
    <property type="entry name" value="tRNA uracil 4-sulfurtransferase ThiI"/>
    <property type="match status" value="1"/>
</dbReference>
<dbReference type="PANTHER" id="PTHR43209">
    <property type="entry name" value="TRNA SULFURTRANSFERASE"/>
    <property type="match status" value="1"/>
</dbReference>
<dbReference type="PANTHER" id="PTHR43209:SF1">
    <property type="entry name" value="TRNA SULFURTRANSFERASE"/>
    <property type="match status" value="1"/>
</dbReference>
<dbReference type="Pfam" id="PF02568">
    <property type="entry name" value="ThiI"/>
    <property type="match status" value="1"/>
</dbReference>
<dbReference type="Pfam" id="PF22025">
    <property type="entry name" value="ThiI_fer"/>
    <property type="match status" value="1"/>
</dbReference>
<dbReference type="Pfam" id="PF02926">
    <property type="entry name" value="THUMP"/>
    <property type="match status" value="1"/>
</dbReference>
<dbReference type="SMART" id="SM00981">
    <property type="entry name" value="THUMP"/>
    <property type="match status" value="1"/>
</dbReference>
<dbReference type="SUPFAM" id="SSF52402">
    <property type="entry name" value="Adenine nucleotide alpha hydrolases-like"/>
    <property type="match status" value="1"/>
</dbReference>
<dbReference type="SUPFAM" id="SSF143437">
    <property type="entry name" value="THUMP domain-like"/>
    <property type="match status" value="1"/>
</dbReference>
<dbReference type="PROSITE" id="PS51165">
    <property type="entry name" value="THUMP"/>
    <property type="match status" value="1"/>
</dbReference>
<evidence type="ECO:0000255" key="1">
    <source>
        <dbReference type="HAMAP-Rule" id="MF_00021"/>
    </source>
</evidence>
<protein>
    <recommendedName>
        <fullName evidence="1">Probable tRNA sulfurtransferase</fullName>
        <ecNumber evidence="1">2.8.1.4</ecNumber>
    </recommendedName>
    <alternativeName>
        <fullName evidence="1">Sulfur carrier protein ThiS sulfurtransferase</fullName>
    </alternativeName>
    <alternativeName>
        <fullName evidence="1">Thiamine biosynthesis protein ThiI</fullName>
    </alternativeName>
    <alternativeName>
        <fullName evidence="1">tRNA 4-thiouridine synthase</fullName>
    </alternativeName>
</protein>
<comment type="function">
    <text evidence="1">Catalyzes the ATP-dependent transfer of a sulfur to tRNA to produce 4-thiouridine in position 8 of tRNAs, which functions as a near-UV photosensor. Also catalyzes the transfer of sulfur to the sulfur carrier protein ThiS, forming ThiS-thiocarboxylate. This is a step in the synthesis of thiazole, in the thiamine biosynthesis pathway. The sulfur is donated as persulfide by IscS.</text>
</comment>
<comment type="catalytic activity">
    <reaction evidence="1">
        <text>[ThiI sulfur-carrier protein]-S-sulfanyl-L-cysteine + a uridine in tRNA + 2 reduced [2Fe-2S]-[ferredoxin] + ATP + H(+) = [ThiI sulfur-carrier protein]-L-cysteine + a 4-thiouridine in tRNA + 2 oxidized [2Fe-2S]-[ferredoxin] + AMP + diphosphate</text>
        <dbReference type="Rhea" id="RHEA:24176"/>
        <dbReference type="Rhea" id="RHEA-COMP:10000"/>
        <dbReference type="Rhea" id="RHEA-COMP:10001"/>
        <dbReference type="Rhea" id="RHEA-COMP:13337"/>
        <dbReference type="Rhea" id="RHEA-COMP:13338"/>
        <dbReference type="Rhea" id="RHEA-COMP:13339"/>
        <dbReference type="Rhea" id="RHEA-COMP:13340"/>
        <dbReference type="ChEBI" id="CHEBI:15378"/>
        <dbReference type="ChEBI" id="CHEBI:29950"/>
        <dbReference type="ChEBI" id="CHEBI:30616"/>
        <dbReference type="ChEBI" id="CHEBI:33019"/>
        <dbReference type="ChEBI" id="CHEBI:33737"/>
        <dbReference type="ChEBI" id="CHEBI:33738"/>
        <dbReference type="ChEBI" id="CHEBI:61963"/>
        <dbReference type="ChEBI" id="CHEBI:65315"/>
        <dbReference type="ChEBI" id="CHEBI:136798"/>
        <dbReference type="ChEBI" id="CHEBI:456215"/>
        <dbReference type="EC" id="2.8.1.4"/>
    </reaction>
</comment>
<comment type="catalytic activity">
    <reaction evidence="1">
        <text>[ThiS sulfur-carrier protein]-C-terminal Gly-Gly-AMP + S-sulfanyl-L-cysteinyl-[cysteine desulfurase] + AH2 = [ThiS sulfur-carrier protein]-C-terminal-Gly-aminoethanethioate + L-cysteinyl-[cysteine desulfurase] + A + AMP + 2 H(+)</text>
        <dbReference type="Rhea" id="RHEA:43340"/>
        <dbReference type="Rhea" id="RHEA-COMP:12157"/>
        <dbReference type="Rhea" id="RHEA-COMP:12158"/>
        <dbReference type="Rhea" id="RHEA-COMP:12910"/>
        <dbReference type="Rhea" id="RHEA-COMP:19908"/>
        <dbReference type="ChEBI" id="CHEBI:13193"/>
        <dbReference type="ChEBI" id="CHEBI:15378"/>
        <dbReference type="ChEBI" id="CHEBI:17499"/>
        <dbReference type="ChEBI" id="CHEBI:29950"/>
        <dbReference type="ChEBI" id="CHEBI:61963"/>
        <dbReference type="ChEBI" id="CHEBI:90618"/>
        <dbReference type="ChEBI" id="CHEBI:232372"/>
        <dbReference type="ChEBI" id="CHEBI:456215"/>
    </reaction>
</comment>
<comment type="pathway">
    <text evidence="1">Cofactor biosynthesis; thiamine diphosphate biosynthesis.</text>
</comment>
<comment type="subcellular location">
    <subcellularLocation>
        <location evidence="1">Cytoplasm</location>
    </subcellularLocation>
</comment>
<comment type="similarity">
    <text evidence="1">Belongs to the ThiI family.</text>
</comment>
<reference key="1">
    <citation type="journal article" date="2004" name="Nucleic Acids Res.">
        <title>The genome sequence of Bacillus cereus ATCC 10987 reveals metabolic adaptations and a large plasmid related to Bacillus anthracis pXO1.</title>
        <authorList>
            <person name="Rasko D.A."/>
            <person name="Ravel J."/>
            <person name="Oekstad O.A."/>
            <person name="Helgason E."/>
            <person name="Cer R.Z."/>
            <person name="Jiang L."/>
            <person name="Shores K.A."/>
            <person name="Fouts D.E."/>
            <person name="Tourasse N.J."/>
            <person name="Angiuoli S.V."/>
            <person name="Kolonay J.F."/>
            <person name="Nelson W.C."/>
            <person name="Kolstoe A.-B."/>
            <person name="Fraser C.M."/>
            <person name="Read T.D."/>
        </authorList>
    </citation>
    <scope>NUCLEOTIDE SEQUENCE [LARGE SCALE GENOMIC DNA]</scope>
    <source>
        <strain>ATCC 10987 / NRS 248</strain>
    </source>
</reference>
<name>THII_BACC1</name>
<gene>
    <name evidence="1" type="primary">thiI</name>
    <name type="ordered locus">BCE_4784</name>
</gene>
<organism>
    <name type="scientific">Bacillus cereus (strain ATCC 10987 / NRS 248)</name>
    <dbReference type="NCBI Taxonomy" id="222523"/>
    <lineage>
        <taxon>Bacteria</taxon>
        <taxon>Bacillati</taxon>
        <taxon>Bacillota</taxon>
        <taxon>Bacilli</taxon>
        <taxon>Bacillales</taxon>
        <taxon>Bacillaceae</taxon>
        <taxon>Bacillus</taxon>
        <taxon>Bacillus cereus group</taxon>
    </lineage>
</organism>
<proteinExistence type="inferred from homology"/>
<feature type="chain" id="PRO_1000074204" description="Probable tRNA sulfurtransferase">
    <location>
        <begin position="1"/>
        <end position="404"/>
    </location>
</feature>
<feature type="domain" description="THUMP" evidence="1">
    <location>
        <begin position="61"/>
        <end position="166"/>
    </location>
</feature>
<feature type="binding site" evidence="1">
    <location>
        <begin position="184"/>
        <end position="185"/>
    </location>
    <ligand>
        <name>ATP</name>
        <dbReference type="ChEBI" id="CHEBI:30616"/>
    </ligand>
</feature>
<feature type="binding site" evidence="1">
    <location>
        <begin position="209"/>
        <end position="210"/>
    </location>
    <ligand>
        <name>ATP</name>
        <dbReference type="ChEBI" id="CHEBI:30616"/>
    </ligand>
</feature>
<feature type="binding site" evidence="1">
    <location>
        <position position="266"/>
    </location>
    <ligand>
        <name>ATP</name>
        <dbReference type="ChEBI" id="CHEBI:30616"/>
    </ligand>
</feature>
<feature type="binding site" evidence="1">
    <location>
        <position position="288"/>
    </location>
    <ligand>
        <name>ATP</name>
        <dbReference type="ChEBI" id="CHEBI:30616"/>
    </ligand>
</feature>
<feature type="binding site" evidence="1">
    <location>
        <position position="297"/>
    </location>
    <ligand>
        <name>ATP</name>
        <dbReference type="ChEBI" id="CHEBI:30616"/>
    </ligand>
</feature>
<sequence>MMTYEYILVRYGEMTTKGKNRSKFVSTLKDNVKFKLKKFPNIKIDATHDRMYIQLNGEDHEAVSERLKDVFGIHKFNLAMKVPSELEDIKKGALAAFLQVKGDVKTFKITVHRSYKHFPMRTMELLPEIGGHILENTEDITVDVHNPDVNVRVEIRSGYSYIMCDERMGAGGLPVGVGGKVMVLLSGGIDSPVAAYLTMKRGVSVEAVHFHSPPFTSERAKQKVIDLAQELTKYCKRVTLHLVPFTEVQKTINKEIPSSYSMTVMRRMMMRITERIAEERNALAITTGESLGQVASQTLDSMHTINEVTNYPVIRPLITMDKLEIIKIAEEIGTYDISIRPYEDCCTVFTPASPATKPKREKANRFEAKYDFTTLIDEAVANKETVVLQTVEVVAEEEKFEELF</sequence>
<accession>Q72Z85</accession>
<keyword id="KW-0067">ATP-binding</keyword>
<keyword id="KW-0963">Cytoplasm</keyword>
<keyword id="KW-0547">Nucleotide-binding</keyword>
<keyword id="KW-0694">RNA-binding</keyword>
<keyword id="KW-0784">Thiamine biosynthesis</keyword>
<keyword id="KW-0808">Transferase</keyword>
<keyword id="KW-0820">tRNA-binding</keyword>